<evidence type="ECO:0000250" key="1"/>
<evidence type="ECO:0000269" key="2">
    <source>
    </source>
</evidence>
<evidence type="ECO:0000305" key="3"/>
<dbReference type="EMBL" id="AF343076">
    <property type="protein sequence ID" value="AAK26645.1"/>
    <property type="molecule type" value="Genomic_DNA"/>
</dbReference>
<dbReference type="EMBL" id="AF343077">
    <property type="protein sequence ID" value="AAK26646.1"/>
    <property type="molecule type" value="mRNA"/>
</dbReference>
<dbReference type="EMBL" id="BX842638">
    <property type="protein sequence ID" value="CAE76573.1"/>
    <property type="molecule type" value="Genomic_DNA"/>
</dbReference>
<dbReference type="EMBL" id="CM002236">
    <property type="protein sequence ID" value="ESA44226.1"/>
    <property type="molecule type" value="Genomic_DNA"/>
</dbReference>
<dbReference type="EMBL" id="CM002236">
    <property type="protein sequence ID" value="ESA44227.1"/>
    <property type="molecule type" value="Genomic_DNA"/>
</dbReference>
<dbReference type="RefSeq" id="XP_011392857.1">
    <property type="nucleotide sequence ID" value="XM_011394555.1"/>
</dbReference>
<dbReference type="RefSeq" id="XP_011392858.1">
    <property type="nucleotide sequence ID" value="XM_011394556.1"/>
</dbReference>
<dbReference type="SMR" id="Q9C0N3"/>
<dbReference type="FunCoup" id="Q9C0N3">
    <property type="interactions" value="641"/>
</dbReference>
<dbReference type="STRING" id="367110.Q9C0N3"/>
<dbReference type="PaxDb" id="5141-EFNCRP00000000515"/>
<dbReference type="EnsemblFungi" id="ESA44226">
    <property type="protein sequence ID" value="ESA44226"/>
    <property type="gene ID" value="NCU00930"/>
</dbReference>
<dbReference type="EnsemblFungi" id="ESA44227">
    <property type="protein sequence ID" value="ESA44227"/>
    <property type="gene ID" value="NCU00930"/>
</dbReference>
<dbReference type="GeneID" id="3880909"/>
<dbReference type="KEGG" id="ncr:NCU00930"/>
<dbReference type="VEuPathDB" id="FungiDB:NCU00930"/>
<dbReference type="HOGENOM" id="CLU_162151_1_0_1"/>
<dbReference type="InParanoid" id="Q9C0N3"/>
<dbReference type="OrthoDB" id="274922at2759"/>
<dbReference type="Proteomes" id="UP000001805">
    <property type="component" value="Chromosome 1, Linkage Group I"/>
</dbReference>
<dbReference type="GO" id="GO:0005743">
    <property type="term" value="C:mitochondrial inner membrane"/>
    <property type="evidence" value="ECO:0000318"/>
    <property type="project" value="GO_Central"/>
</dbReference>
<dbReference type="GO" id="GO:0042719">
    <property type="term" value="C:mitochondrial intermembrane space protein transporter complex"/>
    <property type="evidence" value="ECO:0007669"/>
    <property type="project" value="EnsemblFungi"/>
</dbReference>
<dbReference type="GO" id="GO:0042721">
    <property type="term" value="C:TIM22 mitochondrial import inner membrane insertion complex"/>
    <property type="evidence" value="ECO:0007669"/>
    <property type="project" value="EnsemblFungi"/>
</dbReference>
<dbReference type="GO" id="GO:0046872">
    <property type="term" value="F:metal ion binding"/>
    <property type="evidence" value="ECO:0007669"/>
    <property type="project" value="UniProtKB-KW"/>
</dbReference>
<dbReference type="GO" id="GO:0140318">
    <property type="term" value="F:protein transporter activity"/>
    <property type="evidence" value="ECO:0007669"/>
    <property type="project" value="EnsemblFungi"/>
</dbReference>
<dbReference type="GO" id="GO:0051082">
    <property type="term" value="F:unfolded protein binding"/>
    <property type="evidence" value="ECO:0007669"/>
    <property type="project" value="EnsemblFungi"/>
</dbReference>
<dbReference type="GO" id="GO:0045039">
    <property type="term" value="P:protein insertion into mitochondrial inner membrane"/>
    <property type="evidence" value="ECO:0000318"/>
    <property type="project" value="GO_Central"/>
</dbReference>
<dbReference type="FunFam" id="1.10.287.810:FF:000018">
    <property type="entry name" value="Mitochondrial import inner membrane translocase subunit tim-10"/>
    <property type="match status" value="1"/>
</dbReference>
<dbReference type="Gene3D" id="1.10.287.810">
    <property type="entry name" value="Mitochondrial import inner membrane translocase subunit tim13 like domains"/>
    <property type="match status" value="1"/>
</dbReference>
<dbReference type="InterPro" id="IPR004217">
    <property type="entry name" value="Tim10-like"/>
</dbReference>
<dbReference type="InterPro" id="IPR035427">
    <property type="entry name" value="Tim10-like_dom_sf"/>
</dbReference>
<dbReference type="PANTHER" id="PTHR11038">
    <property type="entry name" value="MITOCHONDRIAL IMPORT INNER MEMBRANE TRANSLOCASE SUBUNIT TIM10"/>
    <property type="match status" value="1"/>
</dbReference>
<dbReference type="PANTHER" id="PTHR11038:SF16">
    <property type="entry name" value="MITOCHONDRIAL IMPORT INNER MEMBRANE TRANSLOCASE SUBUNIT TIM10"/>
    <property type="match status" value="1"/>
</dbReference>
<dbReference type="Pfam" id="PF02953">
    <property type="entry name" value="zf-Tim10_DDP"/>
    <property type="match status" value="1"/>
</dbReference>
<dbReference type="SUPFAM" id="SSF144122">
    <property type="entry name" value="Tim10-like"/>
    <property type="match status" value="1"/>
</dbReference>
<accession>Q9C0N3</accession>
<accession>Q7SFB7</accession>
<accession>V5IRP3</accession>
<sequence>MFGLGRPQPTSAEKIAAVENELKVVAEMHSRMVKICTLKCIDKSYREGDLSKGESVCLDRCAAKFFETHQKISDQLQKETQARGGGGFGM</sequence>
<comment type="function">
    <text evidence="2">Mitochondrial intermembrane chaperone that participates in the import and insertion of multi-pass transmembrane proteins into the mitochondrial inner membrane. Also required for the transfer of beta-barrel precursors from the TOM complex to the sorting and assembly machinery (SAM complex) of the outer membrane. Acts as a chaperone-like protein that protects the hydrophobic precursors from aggregation and guide them through the mitochondrial intermembrane space.</text>
</comment>
<comment type="subunit">
    <text evidence="2">Heterohexamer; composed of 3 copies of tim9 and 3 copies of tim10, named soluble 70 kDa complex. Associates directly with the TIM22 complex, whose core is composed of tim22 and tim54. Interacts with the transmembrane regions of multi-pass transmembrane proteins in transit.</text>
</comment>
<comment type="subcellular location">
    <subcellularLocation>
        <location evidence="2">Mitochondrion inner membrane</location>
        <topology evidence="2">Peripheral membrane protein</topology>
        <orientation evidence="2">Intermembrane side</orientation>
    </subcellularLocation>
</comment>
<comment type="domain">
    <text evidence="1">The twin CX3C motif contains 4 conserved Cys residues that form 2 disulfide bonds in the mitochondrial intermembrane space. However, during the transit of tim10 from cytoplasm into mitochondrion, the Cys residues probably coordinate zinc, thereby preventing folding and allowing its transfer across mitochondrial outer membrane (By similarity).</text>
</comment>
<comment type="similarity">
    <text evidence="3">Belongs to the small Tim family.</text>
</comment>
<keyword id="KW-0143">Chaperone</keyword>
<keyword id="KW-1015">Disulfide bond</keyword>
<keyword id="KW-0472">Membrane</keyword>
<keyword id="KW-0479">Metal-binding</keyword>
<keyword id="KW-0496">Mitochondrion</keyword>
<keyword id="KW-0999">Mitochondrion inner membrane</keyword>
<keyword id="KW-0653">Protein transport</keyword>
<keyword id="KW-1185">Reference proteome</keyword>
<keyword id="KW-0811">Translocation</keyword>
<keyword id="KW-0813">Transport</keyword>
<keyword id="KW-0862">Zinc</keyword>
<name>TIM10_NEUCR</name>
<feature type="chain" id="PRO_0000193620" description="Mitochondrial import inner membrane translocase subunit tim10">
    <location>
        <begin position="1"/>
        <end position="90"/>
    </location>
</feature>
<feature type="short sequence motif" description="Twin CX3C motif">
    <location>
        <begin position="36"/>
        <end position="61"/>
    </location>
</feature>
<feature type="disulfide bond" evidence="1">
    <location>
        <begin position="36"/>
        <end position="61"/>
    </location>
</feature>
<feature type="disulfide bond" evidence="1">
    <location>
        <begin position="40"/>
        <end position="57"/>
    </location>
</feature>
<gene>
    <name type="primary">tim10</name>
    <name type="ORF">G17B7.020</name>
    <name type="ORF">NCU00930</name>
</gene>
<protein>
    <recommendedName>
        <fullName>Mitochondrial import inner membrane translocase subunit tim10</fullName>
    </recommendedName>
</protein>
<reference key="1">
    <citation type="journal article" date="2004" name="Mol. Biol. Cell">
        <title>Reconstituted TOM core complex and Tim9/Tim10 complex of mitochondria are sufficient for translocation of the ADP/ATP carrier across membranes.</title>
        <authorList>
            <person name="Vasiljev A."/>
            <person name="Ahting U."/>
            <person name="Nargang F.E."/>
            <person name="Go N.E."/>
            <person name="Habib S.J."/>
            <person name="Kozany C."/>
            <person name="Panneels V."/>
            <person name="Sinning I."/>
            <person name="Prokisch H."/>
            <person name="Neupert W."/>
            <person name="Nussberger S."/>
            <person name="Rapaport D."/>
        </authorList>
    </citation>
    <scope>NUCLEOTIDE SEQUENCE [MRNA]</scope>
    <scope>FUNCTION</scope>
    <scope>SUBCELLULAR LOCATION</scope>
    <scope>SUBUNIT</scope>
</reference>
<reference key="2">
    <citation type="journal article" date="2003" name="Nucleic Acids Res.">
        <title>What's in the genome of a filamentous fungus? Analysis of the Neurospora genome sequence.</title>
        <authorList>
            <person name="Mannhaupt G."/>
            <person name="Montrone C."/>
            <person name="Haase D."/>
            <person name="Mewes H.-W."/>
            <person name="Aign V."/>
            <person name="Hoheisel J.D."/>
            <person name="Fartmann B."/>
            <person name="Nyakatura G."/>
            <person name="Kempken F."/>
            <person name="Maier J."/>
            <person name="Schulte U."/>
        </authorList>
    </citation>
    <scope>NUCLEOTIDE SEQUENCE [LARGE SCALE GENOMIC DNA]</scope>
    <source>
        <strain>ATCC 24698 / 74-OR23-1A / CBS 708.71 / DSM 1257 / FGSC 987</strain>
    </source>
</reference>
<reference key="3">
    <citation type="journal article" date="2003" name="Nature">
        <title>The genome sequence of the filamentous fungus Neurospora crassa.</title>
        <authorList>
            <person name="Galagan J.E."/>
            <person name="Calvo S.E."/>
            <person name="Borkovich K.A."/>
            <person name="Selker E.U."/>
            <person name="Read N.D."/>
            <person name="Jaffe D.B."/>
            <person name="FitzHugh W."/>
            <person name="Ma L.-J."/>
            <person name="Smirnov S."/>
            <person name="Purcell S."/>
            <person name="Rehman B."/>
            <person name="Elkins T."/>
            <person name="Engels R."/>
            <person name="Wang S."/>
            <person name="Nielsen C.B."/>
            <person name="Butler J."/>
            <person name="Endrizzi M."/>
            <person name="Qui D."/>
            <person name="Ianakiev P."/>
            <person name="Bell-Pedersen D."/>
            <person name="Nelson M.A."/>
            <person name="Werner-Washburne M."/>
            <person name="Selitrennikoff C.P."/>
            <person name="Kinsey J.A."/>
            <person name="Braun E.L."/>
            <person name="Zelter A."/>
            <person name="Schulte U."/>
            <person name="Kothe G.O."/>
            <person name="Jedd G."/>
            <person name="Mewes H.-W."/>
            <person name="Staben C."/>
            <person name="Marcotte E."/>
            <person name="Greenberg D."/>
            <person name="Roy A."/>
            <person name="Foley K."/>
            <person name="Naylor J."/>
            <person name="Stange-Thomann N."/>
            <person name="Barrett R."/>
            <person name="Gnerre S."/>
            <person name="Kamal M."/>
            <person name="Kamvysselis M."/>
            <person name="Mauceli E.W."/>
            <person name="Bielke C."/>
            <person name="Rudd S."/>
            <person name="Frishman D."/>
            <person name="Krystofova S."/>
            <person name="Rasmussen C."/>
            <person name="Metzenberg R.L."/>
            <person name="Perkins D.D."/>
            <person name="Kroken S."/>
            <person name="Cogoni C."/>
            <person name="Macino G."/>
            <person name="Catcheside D.E.A."/>
            <person name="Li W."/>
            <person name="Pratt R.J."/>
            <person name="Osmani S.A."/>
            <person name="DeSouza C.P.C."/>
            <person name="Glass N.L."/>
            <person name="Orbach M.J."/>
            <person name="Berglund J.A."/>
            <person name="Voelker R."/>
            <person name="Yarden O."/>
            <person name="Plamann M."/>
            <person name="Seiler S."/>
            <person name="Dunlap J.C."/>
            <person name="Radford A."/>
            <person name="Aramayo R."/>
            <person name="Natvig D.O."/>
            <person name="Alex L.A."/>
            <person name="Mannhaupt G."/>
            <person name="Ebbole D.J."/>
            <person name="Freitag M."/>
            <person name="Paulsen I."/>
            <person name="Sachs M.S."/>
            <person name="Lander E.S."/>
            <person name="Nusbaum C."/>
            <person name="Birren B.W."/>
        </authorList>
    </citation>
    <scope>NUCLEOTIDE SEQUENCE [LARGE SCALE GENOMIC DNA]</scope>
    <source>
        <strain>ATCC 24698 / 74-OR23-1A / CBS 708.71 / DSM 1257 / FGSC 987</strain>
    </source>
</reference>
<proteinExistence type="evidence at protein level"/>
<organism>
    <name type="scientific">Neurospora crassa (strain ATCC 24698 / 74-OR23-1A / CBS 708.71 / DSM 1257 / FGSC 987)</name>
    <dbReference type="NCBI Taxonomy" id="367110"/>
    <lineage>
        <taxon>Eukaryota</taxon>
        <taxon>Fungi</taxon>
        <taxon>Dikarya</taxon>
        <taxon>Ascomycota</taxon>
        <taxon>Pezizomycotina</taxon>
        <taxon>Sordariomycetes</taxon>
        <taxon>Sordariomycetidae</taxon>
        <taxon>Sordariales</taxon>
        <taxon>Sordariaceae</taxon>
        <taxon>Neurospora</taxon>
    </lineage>
</organism>